<dbReference type="EMBL" id="CP000514">
    <property type="protein sequence ID" value="ABM17920.1"/>
    <property type="molecule type" value="Genomic_DNA"/>
</dbReference>
<dbReference type="RefSeq" id="WP_011784342.1">
    <property type="nucleotide sequence ID" value="NC_008740.1"/>
</dbReference>
<dbReference type="SMR" id="A1TYV1"/>
<dbReference type="STRING" id="351348.Maqu_0823"/>
<dbReference type="KEGG" id="maq:Maqu_0823"/>
<dbReference type="eggNOG" id="COG0254">
    <property type="taxonomic scope" value="Bacteria"/>
</dbReference>
<dbReference type="HOGENOM" id="CLU_114306_4_3_6"/>
<dbReference type="OrthoDB" id="9803251at2"/>
<dbReference type="Proteomes" id="UP000000998">
    <property type="component" value="Chromosome"/>
</dbReference>
<dbReference type="GO" id="GO:1990904">
    <property type="term" value="C:ribonucleoprotein complex"/>
    <property type="evidence" value="ECO:0007669"/>
    <property type="project" value="UniProtKB-KW"/>
</dbReference>
<dbReference type="GO" id="GO:0005840">
    <property type="term" value="C:ribosome"/>
    <property type="evidence" value="ECO:0007669"/>
    <property type="project" value="UniProtKB-KW"/>
</dbReference>
<dbReference type="GO" id="GO:0046872">
    <property type="term" value="F:metal ion binding"/>
    <property type="evidence" value="ECO:0007669"/>
    <property type="project" value="UniProtKB-KW"/>
</dbReference>
<dbReference type="GO" id="GO:0019843">
    <property type="term" value="F:rRNA binding"/>
    <property type="evidence" value="ECO:0007669"/>
    <property type="project" value="UniProtKB-KW"/>
</dbReference>
<dbReference type="GO" id="GO:0003735">
    <property type="term" value="F:structural constituent of ribosome"/>
    <property type="evidence" value="ECO:0007669"/>
    <property type="project" value="InterPro"/>
</dbReference>
<dbReference type="GO" id="GO:0006412">
    <property type="term" value="P:translation"/>
    <property type="evidence" value="ECO:0007669"/>
    <property type="project" value="UniProtKB-UniRule"/>
</dbReference>
<dbReference type="Gene3D" id="4.10.830.30">
    <property type="entry name" value="Ribosomal protein L31"/>
    <property type="match status" value="1"/>
</dbReference>
<dbReference type="HAMAP" id="MF_00501">
    <property type="entry name" value="Ribosomal_bL31_1"/>
    <property type="match status" value="1"/>
</dbReference>
<dbReference type="InterPro" id="IPR034704">
    <property type="entry name" value="Ribosomal_bL28/bL31-like_sf"/>
</dbReference>
<dbReference type="InterPro" id="IPR002150">
    <property type="entry name" value="Ribosomal_bL31"/>
</dbReference>
<dbReference type="InterPro" id="IPR027491">
    <property type="entry name" value="Ribosomal_bL31_A"/>
</dbReference>
<dbReference type="InterPro" id="IPR042105">
    <property type="entry name" value="Ribosomal_bL31_sf"/>
</dbReference>
<dbReference type="NCBIfam" id="TIGR00105">
    <property type="entry name" value="L31"/>
    <property type="match status" value="1"/>
</dbReference>
<dbReference type="NCBIfam" id="NF000612">
    <property type="entry name" value="PRK00019.1"/>
    <property type="match status" value="1"/>
</dbReference>
<dbReference type="NCBIfam" id="NF001809">
    <property type="entry name" value="PRK00528.1"/>
    <property type="match status" value="1"/>
</dbReference>
<dbReference type="PANTHER" id="PTHR33280">
    <property type="entry name" value="50S RIBOSOMAL PROTEIN L31, CHLOROPLASTIC"/>
    <property type="match status" value="1"/>
</dbReference>
<dbReference type="PANTHER" id="PTHR33280:SF6">
    <property type="entry name" value="LARGE RIBOSOMAL SUBUNIT PROTEIN BL31A"/>
    <property type="match status" value="1"/>
</dbReference>
<dbReference type="Pfam" id="PF01197">
    <property type="entry name" value="Ribosomal_L31"/>
    <property type="match status" value="1"/>
</dbReference>
<dbReference type="PRINTS" id="PR01249">
    <property type="entry name" value="RIBOSOMALL31"/>
</dbReference>
<dbReference type="SUPFAM" id="SSF143800">
    <property type="entry name" value="L28p-like"/>
    <property type="match status" value="1"/>
</dbReference>
<dbReference type="PROSITE" id="PS01143">
    <property type="entry name" value="RIBOSOMAL_L31"/>
    <property type="match status" value="1"/>
</dbReference>
<evidence type="ECO:0000255" key="1">
    <source>
        <dbReference type="HAMAP-Rule" id="MF_00501"/>
    </source>
</evidence>
<evidence type="ECO:0000305" key="2"/>
<organism>
    <name type="scientific">Marinobacter nauticus (strain ATCC 700491 / DSM 11845 / VT8)</name>
    <name type="common">Marinobacter aquaeolei</name>
    <dbReference type="NCBI Taxonomy" id="351348"/>
    <lineage>
        <taxon>Bacteria</taxon>
        <taxon>Pseudomonadati</taxon>
        <taxon>Pseudomonadota</taxon>
        <taxon>Gammaproteobacteria</taxon>
        <taxon>Pseudomonadales</taxon>
        <taxon>Marinobacteraceae</taxon>
        <taxon>Marinobacter</taxon>
    </lineage>
</organism>
<reference key="1">
    <citation type="journal article" date="2011" name="Appl. Environ. Microbiol.">
        <title>Genomic potential of Marinobacter aquaeolei, a biogeochemical 'opportunitroph'.</title>
        <authorList>
            <person name="Singer E."/>
            <person name="Webb E.A."/>
            <person name="Nelson W.C."/>
            <person name="Heidelberg J.F."/>
            <person name="Ivanova N."/>
            <person name="Pati A."/>
            <person name="Edwards K.J."/>
        </authorList>
    </citation>
    <scope>NUCLEOTIDE SEQUENCE [LARGE SCALE GENOMIC DNA]</scope>
    <source>
        <strain>ATCC 700491 / DSM 11845 / VT8</strain>
    </source>
</reference>
<protein>
    <recommendedName>
        <fullName evidence="1">Large ribosomal subunit protein bL31</fullName>
    </recommendedName>
    <alternativeName>
        <fullName evidence="2">50S ribosomal protein L31</fullName>
    </alternativeName>
</protein>
<proteinExistence type="inferred from homology"/>
<comment type="function">
    <text evidence="1">Binds the 23S rRNA.</text>
</comment>
<comment type="cofactor">
    <cofactor evidence="1">
        <name>Zn(2+)</name>
        <dbReference type="ChEBI" id="CHEBI:29105"/>
    </cofactor>
    <text evidence="1">Binds 1 zinc ion per subunit.</text>
</comment>
<comment type="subunit">
    <text evidence="1">Part of the 50S ribosomal subunit.</text>
</comment>
<comment type="similarity">
    <text evidence="1">Belongs to the bacterial ribosomal protein bL31 family. Type A subfamily.</text>
</comment>
<feature type="chain" id="PRO_1000126655" description="Large ribosomal subunit protein bL31">
    <location>
        <begin position="1"/>
        <end position="73"/>
    </location>
</feature>
<feature type="binding site" evidence="1">
    <location>
        <position position="16"/>
    </location>
    <ligand>
        <name>Zn(2+)</name>
        <dbReference type="ChEBI" id="CHEBI:29105"/>
    </ligand>
</feature>
<feature type="binding site" evidence="1">
    <location>
        <position position="18"/>
    </location>
    <ligand>
        <name>Zn(2+)</name>
        <dbReference type="ChEBI" id="CHEBI:29105"/>
    </ligand>
</feature>
<feature type="binding site" evidence="1">
    <location>
        <position position="37"/>
    </location>
    <ligand>
        <name>Zn(2+)</name>
        <dbReference type="ChEBI" id="CHEBI:29105"/>
    </ligand>
</feature>
<feature type="binding site" evidence="1">
    <location>
        <position position="40"/>
    </location>
    <ligand>
        <name>Zn(2+)</name>
        <dbReference type="ChEBI" id="CHEBI:29105"/>
    </ligand>
</feature>
<sequence>MKEGIHPKYEDITATCSCGNVIKTRSTIGHDLQLDVCSQCHPFYTGKQKVMDTGGRIDRFQKRFGSRIGGKKG</sequence>
<keyword id="KW-0479">Metal-binding</keyword>
<keyword id="KW-0687">Ribonucleoprotein</keyword>
<keyword id="KW-0689">Ribosomal protein</keyword>
<keyword id="KW-0694">RNA-binding</keyword>
<keyword id="KW-0699">rRNA-binding</keyword>
<keyword id="KW-0862">Zinc</keyword>
<accession>A1TYV1</accession>
<name>RL31_MARN8</name>
<gene>
    <name evidence="1" type="primary">rpmE</name>
    <name type="ordered locus">Maqu_0823</name>
</gene>